<reference key="1">
    <citation type="journal article" date="2005" name="Nature">
        <title>Genome sequencing and analysis of Aspergillus oryzae.</title>
        <authorList>
            <person name="Machida M."/>
            <person name="Asai K."/>
            <person name="Sano M."/>
            <person name="Tanaka T."/>
            <person name="Kumagai T."/>
            <person name="Terai G."/>
            <person name="Kusumoto K."/>
            <person name="Arima T."/>
            <person name="Akita O."/>
            <person name="Kashiwagi Y."/>
            <person name="Abe K."/>
            <person name="Gomi K."/>
            <person name="Horiuchi H."/>
            <person name="Kitamoto K."/>
            <person name="Kobayashi T."/>
            <person name="Takeuchi M."/>
            <person name="Denning D.W."/>
            <person name="Galagan J.E."/>
            <person name="Nierman W.C."/>
            <person name="Yu J."/>
            <person name="Archer D.B."/>
            <person name="Bennett J.W."/>
            <person name="Bhatnagar D."/>
            <person name="Cleveland T.E."/>
            <person name="Fedorova N.D."/>
            <person name="Gotoh O."/>
            <person name="Horikawa H."/>
            <person name="Hosoyama A."/>
            <person name="Ichinomiya M."/>
            <person name="Igarashi R."/>
            <person name="Iwashita K."/>
            <person name="Juvvadi P.R."/>
            <person name="Kato M."/>
            <person name="Kato Y."/>
            <person name="Kin T."/>
            <person name="Kokubun A."/>
            <person name="Maeda H."/>
            <person name="Maeyama N."/>
            <person name="Maruyama J."/>
            <person name="Nagasaki H."/>
            <person name="Nakajima T."/>
            <person name="Oda K."/>
            <person name="Okada K."/>
            <person name="Paulsen I."/>
            <person name="Sakamoto K."/>
            <person name="Sawano T."/>
            <person name="Takahashi M."/>
            <person name="Takase K."/>
            <person name="Terabayashi Y."/>
            <person name="Wortman J.R."/>
            <person name="Yamada O."/>
            <person name="Yamagata Y."/>
            <person name="Anazawa H."/>
            <person name="Hata Y."/>
            <person name="Koide Y."/>
            <person name="Komori T."/>
            <person name="Koyama Y."/>
            <person name="Minetoki T."/>
            <person name="Suharnan S."/>
            <person name="Tanaka A."/>
            <person name="Isono K."/>
            <person name="Kuhara S."/>
            <person name="Ogasawara N."/>
            <person name="Kikuchi H."/>
        </authorList>
    </citation>
    <scope>NUCLEOTIDE SEQUENCE [LARGE SCALE GENOMIC DNA]</scope>
    <source>
        <strain>ATCC 42149 / RIB 40</strain>
    </source>
</reference>
<evidence type="ECO:0000250" key="1"/>
<evidence type="ECO:0000250" key="2">
    <source>
        <dbReference type="UniProtKB" id="P43601"/>
    </source>
</evidence>
<evidence type="ECO:0000256" key="3">
    <source>
        <dbReference type="SAM" id="MobiDB-lite"/>
    </source>
</evidence>
<evidence type="ECO:0000305" key="4"/>
<comment type="function">
    <text evidence="1">The PI(3,5)P2 regulatory complex regulates both the synthesis and turnover of phosphatidylinositol 3,5-bisphosphate (PtdIns(3,5)P2). Necessary for proper vacuole morphology. Plays an important role in osmotically-induced vacuole fragmentation. Required for cytoplasm to vacuole transport (Cvt) vesicle formation, pexophagy and starvation-induced autophagy. Involved in correct atg9 trafficking to the pre-autophagosomal structure. Might also be involved in premeiotic DNA replication (By similarity).</text>
</comment>
<comment type="subunit">
    <text evidence="1">Component of the PI(3,5)P2 regulatory complex.</text>
</comment>
<comment type="subcellular location">
    <subcellularLocation>
        <location evidence="1">Preautophagosomal structure membrane</location>
        <topology evidence="1">Peripheral membrane protein</topology>
    </subcellularLocation>
    <subcellularLocation>
        <location evidence="1">Vacuole membrane</location>
        <topology evidence="1">Peripheral membrane protein</topology>
    </subcellularLocation>
    <subcellularLocation>
        <location evidence="1">Endosome membrane</location>
        <topology evidence="1">Peripheral membrane protein</topology>
    </subcellularLocation>
</comment>
<comment type="domain">
    <text evidence="1">The N-terminus might form a beta-propeller domain involved in specific binding to phosphatidylinositol 3,5-bisphosphate (PIP2), leading to the association of the protein to the membrane.</text>
</comment>
<comment type="domain">
    <text evidence="2">The L/FRRG motif is essential for the cytoplasm to vacuole transport (Cvt) pathway, for the recruitment of atg8 and atg16 to the PAS in nutrient-rich medium, and for its recruitment to and dissociation from the PAS under starvation conditions.</text>
</comment>
<comment type="similarity">
    <text evidence="4">Belongs to the WD repeat PROPPIN family.</text>
</comment>
<feature type="chain" id="PRO_0000317997" description="Autophagy-related protein 18">
    <location>
        <begin position="1"/>
        <end position="413"/>
    </location>
</feature>
<feature type="repeat" description="WD 1">
    <location>
        <begin position="1"/>
        <end position="36"/>
    </location>
</feature>
<feature type="repeat" description="WD 2">
    <location>
        <begin position="69"/>
        <end position="114"/>
    </location>
</feature>
<feature type="repeat" description="WD 3">
    <location>
        <begin position="141"/>
        <end position="182"/>
    </location>
</feature>
<feature type="repeat" description="WD 4">
    <location>
        <begin position="185"/>
        <end position="225"/>
    </location>
</feature>
<feature type="repeat" description="WD 5">
    <location>
        <begin position="230"/>
        <end position="269"/>
    </location>
</feature>
<feature type="repeat" description="WD 6">
    <location>
        <begin position="308"/>
        <end position="354"/>
    </location>
</feature>
<feature type="repeat" description="WD 7">
    <location>
        <begin position="366"/>
        <end position="406"/>
    </location>
</feature>
<feature type="region of interest" description="Disordered" evidence="3">
    <location>
        <begin position="263"/>
        <end position="315"/>
    </location>
</feature>
<feature type="short sequence motif" description="L/FRRG motif" evidence="2">
    <location>
        <begin position="226"/>
        <end position="230"/>
    </location>
</feature>
<feature type="compositionally biased region" description="Low complexity" evidence="3">
    <location>
        <begin position="263"/>
        <end position="289"/>
    </location>
</feature>
<feature type="compositionally biased region" description="Basic and acidic residues" evidence="3">
    <location>
        <begin position="296"/>
        <end position="305"/>
    </location>
</feature>
<accession>Q2U6D5</accession>
<name>ATG18_ASPOR</name>
<keyword id="KW-0072">Autophagy</keyword>
<keyword id="KW-0967">Endosome</keyword>
<keyword id="KW-0472">Membrane</keyword>
<keyword id="KW-0653">Protein transport</keyword>
<keyword id="KW-1185">Reference proteome</keyword>
<keyword id="KW-0677">Repeat</keyword>
<keyword id="KW-0813">Transport</keyword>
<keyword id="KW-0926">Vacuole</keyword>
<keyword id="KW-0853">WD repeat</keyword>
<sequence length="413" mass="44983">MAMNFVTFNQDYSYLAVATAKGFRIFTTDPFAKSYETKEGNIAIIEMLFSTSLVALILSPRRLQITNTKRQSTICELTFPTTVLAVKLNRKRLVIVLEDQIYLYDIQTMKLLYTIETSPNPSAICALSPSSDNCYLAYPLPHKAPPTSFTPPSHAPPGNTHISPTSGEVLIFDTLKLEAINVIEAHRSPLACITLNSDGTLIATASDKGTIIRVFSVPDGHKLYQFRRGSIPSRIYSMSFNTTSTLLCVSSSTETIHLFKLSQGQSSESSLPSPSAPQRSMSQSSLSNSPDEDETSGDKDSSEFHSRKHNGTLMGMLRRTSQTVGSSFAAKVGGYLPKGVSEMWEPARDFAWIKLPKSNPGPGGNGNTGPLRSVVAMSNNTPQVMVVTSDGNFYVFSIDLSKGGEGTLTKQYS</sequence>
<organism>
    <name type="scientific">Aspergillus oryzae (strain ATCC 42149 / RIB 40)</name>
    <name type="common">Yellow koji mold</name>
    <dbReference type="NCBI Taxonomy" id="510516"/>
    <lineage>
        <taxon>Eukaryota</taxon>
        <taxon>Fungi</taxon>
        <taxon>Dikarya</taxon>
        <taxon>Ascomycota</taxon>
        <taxon>Pezizomycotina</taxon>
        <taxon>Eurotiomycetes</taxon>
        <taxon>Eurotiomycetidae</taxon>
        <taxon>Eurotiales</taxon>
        <taxon>Aspergillaceae</taxon>
        <taxon>Aspergillus</taxon>
        <taxon>Aspergillus subgen. Circumdati</taxon>
    </lineage>
</organism>
<protein>
    <recommendedName>
        <fullName>Autophagy-related protein 18</fullName>
    </recommendedName>
</protein>
<proteinExistence type="inferred from homology"/>
<gene>
    <name type="primary">atg18</name>
    <name type="ORF">AO090120000284</name>
</gene>
<dbReference type="EMBL" id="BA000053">
    <property type="protein sequence ID" value="BAE62880.1"/>
    <property type="molecule type" value="Genomic_DNA"/>
</dbReference>
<dbReference type="SMR" id="Q2U6D5"/>
<dbReference type="STRING" id="510516.Q2U6D5"/>
<dbReference type="EnsemblFungi" id="BAE62880">
    <property type="protein sequence ID" value="BAE62880"/>
    <property type="gene ID" value="AO090120000284"/>
</dbReference>
<dbReference type="HOGENOM" id="CLU_025895_5_2_1"/>
<dbReference type="OMA" id="NIAILEM"/>
<dbReference type="Proteomes" id="UP000006564">
    <property type="component" value="Chromosome 5"/>
</dbReference>
<dbReference type="GO" id="GO:0010008">
    <property type="term" value="C:endosome membrane"/>
    <property type="evidence" value="ECO:0007669"/>
    <property type="project" value="UniProtKB-SubCell"/>
</dbReference>
<dbReference type="GO" id="GO:0034045">
    <property type="term" value="C:phagophore assembly site membrane"/>
    <property type="evidence" value="ECO:0007669"/>
    <property type="project" value="UniProtKB-SubCell"/>
</dbReference>
<dbReference type="GO" id="GO:0005774">
    <property type="term" value="C:vacuolar membrane"/>
    <property type="evidence" value="ECO:0007669"/>
    <property type="project" value="UniProtKB-SubCell"/>
</dbReference>
<dbReference type="GO" id="GO:0006914">
    <property type="term" value="P:autophagy"/>
    <property type="evidence" value="ECO:0007669"/>
    <property type="project" value="UniProtKB-KW"/>
</dbReference>
<dbReference type="GO" id="GO:0015031">
    <property type="term" value="P:protein transport"/>
    <property type="evidence" value="ECO:0007669"/>
    <property type="project" value="UniProtKB-KW"/>
</dbReference>
<dbReference type="FunFam" id="2.130.10.10:FF:000965">
    <property type="entry name" value="Autophagy-like protein 18 Atg18"/>
    <property type="match status" value="1"/>
</dbReference>
<dbReference type="Gene3D" id="2.130.10.10">
    <property type="entry name" value="YVTN repeat-like/Quinoprotein amine dehydrogenase"/>
    <property type="match status" value="2"/>
</dbReference>
<dbReference type="InterPro" id="IPR048720">
    <property type="entry name" value="PROPPIN"/>
</dbReference>
<dbReference type="InterPro" id="IPR015943">
    <property type="entry name" value="WD40/YVTN_repeat-like_dom_sf"/>
</dbReference>
<dbReference type="InterPro" id="IPR036322">
    <property type="entry name" value="WD40_repeat_dom_sf"/>
</dbReference>
<dbReference type="InterPro" id="IPR001680">
    <property type="entry name" value="WD40_rpt"/>
</dbReference>
<dbReference type="PANTHER" id="PTHR11227">
    <property type="entry name" value="WD-REPEAT PROTEIN INTERACTING WITH PHOSPHOINOSIDES WIPI -RELATED"/>
    <property type="match status" value="1"/>
</dbReference>
<dbReference type="Pfam" id="PF21032">
    <property type="entry name" value="PROPPIN"/>
    <property type="match status" value="2"/>
</dbReference>
<dbReference type="SMART" id="SM00320">
    <property type="entry name" value="WD40"/>
    <property type="match status" value="2"/>
</dbReference>
<dbReference type="SUPFAM" id="SSF50978">
    <property type="entry name" value="WD40 repeat-like"/>
    <property type="match status" value="1"/>
</dbReference>